<comment type="function">
    <text evidence="1">Responsible for the disassembly of ribosomes from messenger RNA at the termination of mitochondrial protein biosynthesis. Acts in collaboration with GFM2. Promotes mitochondrial ribosome recycling by dissolution of intersubunit contacts.</text>
</comment>
<comment type="subcellular location">
    <subcellularLocation>
        <location evidence="1">Mitochondrion</location>
    </subcellularLocation>
</comment>
<comment type="similarity">
    <text evidence="3">Belongs to the RRF family.</text>
</comment>
<organism>
    <name type="scientific">Mus musculus</name>
    <name type="common">Mouse</name>
    <dbReference type="NCBI Taxonomy" id="10090"/>
    <lineage>
        <taxon>Eukaryota</taxon>
        <taxon>Metazoa</taxon>
        <taxon>Chordata</taxon>
        <taxon>Craniata</taxon>
        <taxon>Vertebrata</taxon>
        <taxon>Euteleostomi</taxon>
        <taxon>Mammalia</taxon>
        <taxon>Eutheria</taxon>
        <taxon>Euarchontoglires</taxon>
        <taxon>Glires</taxon>
        <taxon>Rodentia</taxon>
        <taxon>Myomorpha</taxon>
        <taxon>Muroidea</taxon>
        <taxon>Muridae</taxon>
        <taxon>Murinae</taxon>
        <taxon>Mus</taxon>
        <taxon>Mus</taxon>
    </lineage>
</organism>
<proteinExistence type="evidence at protein level"/>
<accession>Q9D6S7</accession>
<accession>B1B055</accession>
<gene>
    <name type="primary">Mrrf</name>
</gene>
<evidence type="ECO:0000250" key="1">
    <source>
        <dbReference type="UniProtKB" id="Q96E11"/>
    </source>
</evidence>
<evidence type="ECO:0000255" key="2"/>
<evidence type="ECO:0000305" key="3"/>
<evidence type="ECO:0007829" key="4">
    <source>
        <dbReference type="PDB" id="1WIH"/>
    </source>
</evidence>
<sequence>MASGIRCFRLLHPAFRSYHAALTRPVSEVSMKTVSGRQHGHRQYSAYPAVPVRHFATKKAKAKGKGQPQARVTVNRALVEDIISLEEVDEDMKSVVEALKDNFNKTLNIRTAPGSLDHITVVTADGKVALNQIGQISMKSPQVILVNMASFPECTAAAIKAIRESGMNLNPEVEGTLIRVPIPKVTREHREMLVKLAKQNTNKAKENLRKVRTNAMNKLKKSKDKTSEDTIRLIEKQISQMADDTVAELDQHLAAKTKELLG</sequence>
<dbReference type="EMBL" id="AK010018">
    <property type="protein sequence ID" value="BAB26646.1"/>
    <property type="molecule type" value="mRNA"/>
</dbReference>
<dbReference type="EMBL" id="AK032371">
    <property type="protein sequence ID" value="BAC27839.1"/>
    <property type="molecule type" value="mRNA"/>
</dbReference>
<dbReference type="EMBL" id="BX293557">
    <property type="status" value="NOT_ANNOTATED_CDS"/>
    <property type="molecule type" value="Genomic_DNA"/>
</dbReference>
<dbReference type="EMBL" id="BC019787">
    <property type="protein sequence ID" value="AAH19787.1"/>
    <property type="molecule type" value="mRNA"/>
</dbReference>
<dbReference type="CCDS" id="CCDS38114.1"/>
<dbReference type="RefSeq" id="NP_080698.1">
    <property type="nucleotide sequence ID" value="NM_026422.2"/>
</dbReference>
<dbReference type="PDB" id="1WIH">
    <property type="method" value="NMR"/>
    <property type="chains" value="A=116-186"/>
</dbReference>
<dbReference type="PDBsum" id="1WIH"/>
<dbReference type="SMR" id="Q9D6S7"/>
<dbReference type="BioGRID" id="212498">
    <property type="interactions" value="5"/>
</dbReference>
<dbReference type="FunCoup" id="Q9D6S7">
    <property type="interactions" value="2141"/>
</dbReference>
<dbReference type="IntAct" id="Q9D6S7">
    <property type="interactions" value="1"/>
</dbReference>
<dbReference type="MINT" id="Q9D6S7"/>
<dbReference type="STRING" id="10090.ENSMUSP00000028250"/>
<dbReference type="GlyGen" id="Q9D6S7">
    <property type="glycosylation" value="1 site, 1 N-linked glycan (1 site)"/>
</dbReference>
<dbReference type="iPTMnet" id="Q9D6S7"/>
<dbReference type="PhosphoSitePlus" id="Q9D6S7"/>
<dbReference type="jPOST" id="Q9D6S7"/>
<dbReference type="PaxDb" id="10090-ENSMUSP00000028250"/>
<dbReference type="PeptideAtlas" id="Q9D6S7"/>
<dbReference type="ProteomicsDB" id="299897"/>
<dbReference type="Pumba" id="Q9D6S7"/>
<dbReference type="Antibodypedia" id="30275">
    <property type="antibodies" value="297 antibodies from 26 providers"/>
</dbReference>
<dbReference type="Ensembl" id="ENSMUST00000028250.9">
    <property type="protein sequence ID" value="ENSMUSP00000028250.3"/>
    <property type="gene ID" value="ENSMUSG00000026887.10"/>
</dbReference>
<dbReference type="GeneID" id="67871"/>
<dbReference type="KEGG" id="mmu:67871"/>
<dbReference type="UCSC" id="uc008jlj.2">
    <property type="organism name" value="mouse"/>
</dbReference>
<dbReference type="AGR" id="MGI:1915121"/>
<dbReference type="CTD" id="92399"/>
<dbReference type="MGI" id="MGI:1915121">
    <property type="gene designation" value="Mrrf"/>
</dbReference>
<dbReference type="VEuPathDB" id="HostDB:ENSMUSG00000026887"/>
<dbReference type="eggNOG" id="KOG4759">
    <property type="taxonomic scope" value="Eukaryota"/>
</dbReference>
<dbReference type="GeneTree" id="ENSGT00390000005084"/>
<dbReference type="HOGENOM" id="CLU_073981_4_1_1"/>
<dbReference type="InParanoid" id="Q9D6S7"/>
<dbReference type="OMA" id="FNPMNNG"/>
<dbReference type="OrthoDB" id="407355at2759"/>
<dbReference type="PhylomeDB" id="Q9D6S7"/>
<dbReference type="TreeFam" id="TF323691"/>
<dbReference type="Reactome" id="R-MMU-5419276">
    <property type="pathway name" value="Mitochondrial translation termination"/>
</dbReference>
<dbReference type="BioGRID-ORCS" id="67871">
    <property type="hits" value="12 hits in 78 CRISPR screens"/>
</dbReference>
<dbReference type="ChiTaRS" id="Mrrf">
    <property type="organism name" value="mouse"/>
</dbReference>
<dbReference type="EvolutionaryTrace" id="Q9D6S7"/>
<dbReference type="PRO" id="PR:Q9D6S7"/>
<dbReference type="Proteomes" id="UP000000589">
    <property type="component" value="Chromosome 2"/>
</dbReference>
<dbReference type="RNAct" id="Q9D6S7">
    <property type="molecule type" value="protein"/>
</dbReference>
<dbReference type="Bgee" id="ENSMUSG00000026887">
    <property type="expression patterns" value="Expressed in embryonic post-anal tail and 226 other cell types or tissues"/>
</dbReference>
<dbReference type="ExpressionAtlas" id="Q9D6S7">
    <property type="expression patterns" value="baseline and differential"/>
</dbReference>
<dbReference type="GO" id="GO:0005739">
    <property type="term" value="C:mitochondrion"/>
    <property type="evidence" value="ECO:0007005"/>
    <property type="project" value="MGI"/>
</dbReference>
<dbReference type="GO" id="GO:0032790">
    <property type="term" value="P:ribosome disassembly"/>
    <property type="evidence" value="ECO:0000250"/>
    <property type="project" value="UniProtKB"/>
</dbReference>
<dbReference type="GO" id="GO:0006412">
    <property type="term" value="P:translation"/>
    <property type="evidence" value="ECO:0007669"/>
    <property type="project" value="UniProtKB-KW"/>
</dbReference>
<dbReference type="FunFam" id="3.30.1360.40:FF:000007">
    <property type="entry name" value="ribosome-recycling factor, mitochondrial isoform X1"/>
    <property type="match status" value="1"/>
</dbReference>
<dbReference type="FunFam" id="1.10.132.20:FF:000003">
    <property type="entry name" value="ribosome-recycling factor, mitochondrial isoform X2"/>
    <property type="match status" value="1"/>
</dbReference>
<dbReference type="Gene3D" id="3.30.1360.40">
    <property type="match status" value="1"/>
</dbReference>
<dbReference type="Gene3D" id="1.10.132.20">
    <property type="entry name" value="Ribosome-recycling factor"/>
    <property type="match status" value="1"/>
</dbReference>
<dbReference type="InterPro" id="IPR002661">
    <property type="entry name" value="Ribosome_recyc_fac"/>
</dbReference>
<dbReference type="InterPro" id="IPR023584">
    <property type="entry name" value="Ribosome_recyc_fac_dom"/>
</dbReference>
<dbReference type="InterPro" id="IPR036191">
    <property type="entry name" value="RRF_sf"/>
</dbReference>
<dbReference type="PANTHER" id="PTHR20982">
    <property type="entry name" value="RIBOSOME RECYCLING FACTOR"/>
    <property type="match status" value="1"/>
</dbReference>
<dbReference type="PANTHER" id="PTHR20982:SF10">
    <property type="entry name" value="RIBOSOME-RECYCLING FACTOR, MITOCHONDRIAL"/>
    <property type="match status" value="1"/>
</dbReference>
<dbReference type="Pfam" id="PF01765">
    <property type="entry name" value="RRF"/>
    <property type="match status" value="1"/>
</dbReference>
<dbReference type="SUPFAM" id="SSF55194">
    <property type="entry name" value="Ribosome recycling factor, RRF"/>
    <property type="match status" value="1"/>
</dbReference>
<feature type="transit peptide" description="Mitochondrion" evidence="2">
    <location>
        <begin position="1"/>
        <end position="55"/>
    </location>
</feature>
<feature type="chain" id="PRO_0000031081" description="Ribosome-recycling factor, mitochondrial">
    <location>
        <begin position="56"/>
        <end position="262"/>
    </location>
</feature>
<feature type="strand" evidence="4">
    <location>
        <begin position="120"/>
        <end position="123"/>
    </location>
</feature>
<feature type="strand" evidence="4">
    <location>
        <begin position="126"/>
        <end position="129"/>
    </location>
</feature>
<feature type="helix" evidence="4">
    <location>
        <begin position="130"/>
        <end position="133"/>
    </location>
</feature>
<feature type="strand" evidence="4">
    <location>
        <begin position="134"/>
        <end position="140"/>
    </location>
</feature>
<feature type="strand" evidence="4">
    <location>
        <begin position="143"/>
        <end position="147"/>
    </location>
</feature>
<feature type="helix" evidence="4">
    <location>
        <begin position="155"/>
        <end position="163"/>
    </location>
</feature>
<feature type="turn" evidence="4">
    <location>
        <begin position="164"/>
        <end position="166"/>
    </location>
</feature>
<feature type="strand" evidence="4">
    <location>
        <begin position="172"/>
        <end position="174"/>
    </location>
</feature>
<feature type="strand" evidence="4">
    <location>
        <begin position="177"/>
        <end position="181"/>
    </location>
</feature>
<name>RRFM_MOUSE</name>
<protein>
    <recommendedName>
        <fullName>Ribosome-recycling factor, mitochondrial</fullName>
        <shortName>RRF</shortName>
    </recommendedName>
    <alternativeName>
        <fullName>Ribosome-releasing factor, mitochondrial</fullName>
    </alternativeName>
</protein>
<keyword id="KW-0002">3D-structure</keyword>
<keyword id="KW-0496">Mitochondrion</keyword>
<keyword id="KW-0648">Protein biosynthesis</keyword>
<keyword id="KW-1185">Reference proteome</keyword>
<keyword id="KW-0809">Transit peptide</keyword>
<reference key="1">
    <citation type="journal article" date="2005" name="Science">
        <title>The transcriptional landscape of the mammalian genome.</title>
        <authorList>
            <person name="Carninci P."/>
            <person name="Kasukawa T."/>
            <person name="Katayama S."/>
            <person name="Gough J."/>
            <person name="Frith M.C."/>
            <person name="Maeda N."/>
            <person name="Oyama R."/>
            <person name="Ravasi T."/>
            <person name="Lenhard B."/>
            <person name="Wells C."/>
            <person name="Kodzius R."/>
            <person name="Shimokawa K."/>
            <person name="Bajic V.B."/>
            <person name="Brenner S.E."/>
            <person name="Batalov S."/>
            <person name="Forrest A.R."/>
            <person name="Zavolan M."/>
            <person name="Davis M.J."/>
            <person name="Wilming L.G."/>
            <person name="Aidinis V."/>
            <person name="Allen J.E."/>
            <person name="Ambesi-Impiombato A."/>
            <person name="Apweiler R."/>
            <person name="Aturaliya R.N."/>
            <person name="Bailey T.L."/>
            <person name="Bansal M."/>
            <person name="Baxter L."/>
            <person name="Beisel K.W."/>
            <person name="Bersano T."/>
            <person name="Bono H."/>
            <person name="Chalk A.M."/>
            <person name="Chiu K.P."/>
            <person name="Choudhary V."/>
            <person name="Christoffels A."/>
            <person name="Clutterbuck D.R."/>
            <person name="Crowe M.L."/>
            <person name="Dalla E."/>
            <person name="Dalrymple B.P."/>
            <person name="de Bono B."/>
            <person name="Della Gatta G."/>
            <person name="di Bernardo D."/>
            <person name="Down T."/>
            <person name="Engstrom P."/>
            <person name="Fagiolini M."/>
            <person name="Faulkner G."/>
            <person name="Fletcher C.F."/>
            <person name="Fukushima T."/>
            <person name="Furuno M."/>
            <person name="Futaki S."/>
            <person name="Gariboldi M."/>
            <person name="Georgii-Hemming P."/>
            <person name="Gingeras T.R."/>
            <person name="Gojobori T."/>
            <person name="Green R.E."/>
            <person name="Gustincich S."/>
            <person name="Harbers M."/>
            <person name="Hayashi Y."/>
            <person name="Hensch T.K."/>
            <person name="Hirokawa N."/>
            <person name="Hill D."/>
            <person name="Huminiecki L."/>
            <person name="Iacono M."/>
            <person name="Ikeo K."/>
            <person name="Iwama A."/>
            <person name="Ishikawa T."/>
            <person name="Jakt M."/>
            <person name="Kanapin A."/>
            <person name="Katoh M."/>
            <person name="Kawasawa Y."/>
            <person name="Kelso J."/>
            <person name="Kitamura H."/>
            <person name="Kitano H."/>
            <person name="Kollias G."/>
            <person name="Krishnan S.P."/>
            <person name="Kruger A."/>
            <person name="Kummerfeld S.K."/>
            <person name="Kurochkin I.V."/>
            <person name="Lareau L.F."/>
            <person name="Lazarevic D."/>
            <person name="Lipovich L."/>
            <person name="Liu J."/>
            <person name="Liuni S."/>
            <person name="McWilliam S."/>
            <person name="Madan Babu M."/>
            <person name="Madera M."/>
            <person name="Marchionni L."/>
            <person name="Matsuda H."/>
            <person name="Matsuzawa S."/>
            <person name="Miki H."/>
            <person name="Mignone F."/>
            <person name="Miyake S."/>
            <person name="Morris K."/>
            <person name="Mottagui-Tabar S."/>
            <person name="Mulder N."/>
            <person name="Nakano N."/>
            <person name="Nakauchi H."/>
            <person name="Ng P."/>
            <person name="Nilsson R."/>
            <person name="Nishiguchi S."/>
            <person name="Nishikawa S."/>
            <person name="Nori F."/>
            <person name="Ohara O."/>
            <person name="Okazaki Y."/>
            <person name="Orlando V."/>
            <person name="Pang K.C."/>
            <person name="Pavan W.J."/>
            <person name="Pavesi G."/>
            <person name="Pesole G."/>
            <person name="Petrovsky N."/>
            <person name="Piazza S."/>
            <person name="Reed J."/>
            <person name="Reid J.F."/>
            <person name="Ring B.Z."/>
            <person name="Ringwald M."/>
            <person name="Rost B."/>
            <person name="Ruan Y."/>
            <person name="Salzberg S.L."/>
            <person name="Sandelin A."/>
            <person name="Schneider C."/>
            <person name="Schoenbach C."/>
            <person name="Sekiguchi K."/>
            <person name="Semple C.A."/>
            <person name="Seno S."/>
            <person name="Sessa L."/>
            <person name="Sheng Y."/>
            <person name="Shibata Y."/>
            <person name="Shimada H."/>
            <person name="Shimada K."/>
            <person name="Silva D."/>
            <person name="Sinclair B."/>
            <person name="Sperling S."/>
            <person name="Stupka E."/>
            <person name="Sugiura K."/>
            <person name="Sultana R."/>
            <person name="Takenaka Y."/>
            <person name="Taki K."/>
            <person name="Tammoja K."/>
            <person name="Tan S.L."/>
            <person name="Tang S."/>
            <person name="Taylor M.S."/>
            <person name="Tegner J."/>
            <person name="Teichmann S.A."/>
            <person name="Ueda H.R."/>
            <person name="van Nimwegen E."/>
            <person name="Verardo R."/>
            <person name="Wei C.L."/>
            <person name="Yagi K."/>
            <person name="Yamanishi H."/>
            <person name="Zabarovsky E."/>
            <person name="Zhu S."/>
            <person name="Zimmer A."/>
            <person name="Hide W."/>
            <person name="Bult C."/>
            <person name="Grimmond S.M."/>
            <person name="Teasdale R.D."/>
            <person name="Liu E.T."/>
            <person name="Brusic V."/>
            <person name="Quackenbush J."/>
            <person name="Wahlestedt C."/>
            <person name="Mattick J.S."/>
            <person name="Hume D.A."/>
            <person name="Kai C."/>
            <person name="Sasaki D."/>
            <person name="Tomaru Y."/>
            <person name="Fukuda S."/>
            <person name="Kanamori-Katayama M."/>
            <person name="Suzuki M."/>
            <person name="Aoki J."/>
            <person name="Arakawa T."/>
            <person name="Iida J."/>
            <person name="Imamura K."/>
            <person name="Itoh M."/>
            <person name="Kato T."/>
            <person name="Kawaji H."/>
            <person name="Kawagashira N."/>
            <person name="Kawashima T."/>
            <person name="Kojima M."/>
            <person name="Kondo S."/>
            <person name="Konno H."/>
            <person name="Nakano K."/>
            <person name="Ninomiya N."/>
            <person name="Nishio T."/>
            <person name="Okada M."/>
            <person name="Plessy C."/>
            <person name="Shibata K."/>
            <person name="Shiraki T."/>
            <person name="Suzuki S."/>
            <person name="Tagami M."/>
            <person name="Waki K."/>
            <person name="Watahiki A."/>
            <person name="Okamura-Oho Y."/>
            <person name="Suzuki H."/>
            <person name="Kawai J."/>
            <person name="Hayashizaki Y."/>
        </authorList>
    </citation>
    <scope>NUCLEOTIDE SEQUENCE [LARGE SCALE MRNA]</scope>
    <source>
        <strain>C57BL/6J</strain>
        <tissue>Olfactory bulb</tissue>
        <tissue>Tongue</tissue>
    </source>
</reference>
<reference key="2">
    <citation type="journal article" date="2009" name="PLoS Biol.">
        <title>Lineage-specific biology revealed by a finished genome assembly of the mouse.</title>
        <authorList>
            <person name="Church D.M."/>
            <person name="Goodstadt L."/>
            <person name="Hillier L.W."/>
            <person name="Zody M.C."/>
            <person name="Goldstein S."/>
            <person name="She X."/>
            <person name="Bult C.J."/>
            <person name="Agarwala R."/>
            <person name="Cherry J.L."/>
            <person name="DiCuccio M."/>
            <person name="Hlavina W."/>
            <person name="Kapustin Y."/>
            <person name="Meric P."/>
            <person name="Maglott D."/>
            <person name="Birtle Z."/>
            <person name="Marques A.C."/>
            <person name="Graves T."/>
            <person name="Zhou S."/>
            <person name="Teague B."/>
            <person name="Potamousis K."/>
            <person name="Churas C."/>
            <person name="Place M."/>
            <person name="Herschleb J."/>
            <person name="Runnheim R."/>
            <person name="Forrest D."/>
            <person name="Amos-Landgraf J."/>
            <person name="Schwartz D.C."/>
            <person name="Cheng Z."/>
            <person name="Lindblad-Toh K."/>
            <person name="Eichler E.E."/>
            <person name="Ponting C.P."/>
        </authorList>
    </citation>
    <scope>NUCLEOTIDE SEQUENCE [LARGE SCALE GENOMIC DNA]</scope>
    <source>
        <strain>C57BL/6J</strain>
    </source>
</reference>
<reference key="3">
    <citation type="journal article" date="2004" name="Genome Res.">
        <title>The status, quality, and expansion of the NIH full-length cDNA project: the Mammalian Gene Collection (MGC).</title>
        <authorList>
            <consortium name="The MGC Project Team"/>
        </authorList>
    </citation>
    <scope>NUCLEOTIDE SEQUENCE [LARGE SCALE MRNA]</scope>
    <source>
        <strain>FVB/N</strain>
        <tissue>Salivary gland</tissue>
    </source>
</reference>
<reference key="4">
    <citation type="journal article" date="2010" name="Cell">
        <title>A tissue-specific atlas of mouse protein phosphorylation and expression.</title>
        <authorList>
            <person name="Huttlin E.L."/>
            <person name="Jedrychowski M.P."/>
            <person name="Elias J.E."/>
            <person name="Goswami T."/>
            <person name="Rad R."/>
            <person name="Beausoleil S.A."/>
            <person name="Villen J."/>
            <person name="Haas W."/>
            <person name="Sowa M.E."/>
            <person name="Gygi S.P."/>
        </authorList>
    </citation>
    <scope>IDENTIFICATION BY MASS SPECTROMETRY [LARGE SCALE ANALYSIS]</scope>
    <source>
        <tissue>Brain</tissue>
        <tissue>Brown adipose tissue</tissue>
        <tissue>Heart</tissue>
        <tissue>Kidney</tissue>
        <tissue>Liver</tissue>
        <tissue>Lung</tissue>
        <tissue>Testis</tissue>
    </source>
</reference>
<reference key="5">
    <citation type="submission" date="2004-11" db="PDB data bank">
        <title>Solution structure of ribosome recycling factor.</title>
        <authorList>
            <consortium name="RIKEN structural genomics initiative (RSGI)"/>
        </authorList>
    </citation>
    <scope>STRUCTURE BY NMR OF 116-186</scope>
</reference>